<name>RL18_EHRCJ</name>
<organism>
    <name type="scientific">Ehrlichia canis (strain Jake)</name>
    <dbReference type="NCBI Taxonomy" id="269484"/>
    <lineage>
        <taxon>Bacteria</taxon>
        <taxon>Pseudomonadati</taxon>
        <taxon>Pseudomonadota</taxon>
        <taxon>Alphaproteobacteria</taxon>
        <taxon>Rickettsiales</taxon>
        <taxon>Anaplasmataceae</taxon>
        <taxon>Ehrlichia</taxon>
    </lineage>
</organism>
<protein>
    <recommendedName>
        <fullName evidence="1">Large ribosomal subunit protein uL18</fullName>
    </recommendedName>
    <alternativeName>
        <fullName evidence="2">50S ribosomal protein L18</fullName>
    </alternativeName>
</protein>
<feature type="chain" id="PRO_0000251310" description="Large ribosomal subunit protein uL18">
    <location>
        <begin position="1"/>
        <end position="121"/>
    </location>
</feature>
<reference key="1">
    <citation type="journal article" date="2006" name="J. Bacteriol.">
        <title>The genome of the obligately intracellular bacterium Ehrlichia canis reveals themes of complex membrane structure and immune evasion strategies.</title>
        <authorList>
            <person name="Mavromatis K."/>
            <person name="Doyle C.K."/>
            <person name="Lykidis A."/>
            <person name="Ivanova N."/>
            <person name="Francino M.P."/>
            <person name="Chain P."/>
            <person name="Shin M."/>
            <person name="Malfatti S."/>
            <person name="Larimer F."/>
            <person name="Copeland A."/>
            <person name="Detter J.C."/>
            <person name="Land M."/>
            <person name="Richardson P.M."/>
            <person name="Yu X.J."/>
            <person name="Walker D.H."/>
            <person name="McBride J.W."/>
            <person name="Kyrpides N.C."/>
        </authorList>
    </citation>
    <scope>NUCLEOTIDE SEQUENCE [LARGE SCALE GENOMIC DNA]</scope>
    <source>
        <strain>Jake</strain>
    </source>
</reference>
<sequence length="121" mass="14027">MVSDCITRSERRKKRVRLKLRRNSSLLRLSIFKSNRHFYVQLIDDKCGRTFASASTLESEVIAVTNRKVNSNAVKIVAKLMSDRLNKLGNCKKFVFDRGPYKYTGIVSEFANELRNYGFEI</sequence>
<proteinExistence type="inferred from homology"/>
<comment type="function">
    <text evidence="1">This is one of the proteins that bind and probably mediate the attachment of the 5S RNA into the large ribosomal subunit, where it forms part of the central protuberance.</text>
</comment>
<comment type="subunit">
    <text evidence="1">Part of the 50S ribosomal subunit; part of the 5S rRNA/L5/L18/L25 subcomplex. Contacts the 5S and 23S rRNAs.</text>
</comment>
<comment type="similarity">
    <text evidence="1">Belongs to the universal ribosomal protein uL18 family.</text>
</comment>
<accession>Q3YRM5</accession>
<keyword id="KW-0687">Ribonucleoprotein</keyword>
<keyword id="KW-0689">Ribosomal protein</keyword>
<keyword id="KW-0694">RNA-binding</keyword>
<keyword id="KW-0699">rRNA-binding</keyword>
<evidence type="ECO:0000255" key="1">
    <source>
        <dbReference type="HAMAP-Rule" id="MF_01337"/>
    </source>
</evidence>
<evidence type="ECO:0000305" key="2"/>
<dbReference type="EMBL" id="CP000107">
    <property type="protein sequence ID" value="AAZ68630.1"/>
    <property type="molecule type" value="Genomic_DNA"/>
</dbReference>
<dbReference type="RefSeq" id="WP_011304708.1">
    <property type="nucleotide sequence ID" value="NC_007354.1"/>
</dbReference>
<dbReference type="SMR" id="Q3YRM5"/>
<dbReference type="FunCoup" id="Q3YRM5">
    <property type="interactions" value="359"/>
</dbReference>
<dbReference type="STRING" id="269484.Ecaj_0596"/>
<dbReference type="KEGG" id="ecn:Ecaj_0596"/>
<dbReference type="eggNOG" id="COG0256">
    <property type="taxonomic scope" value="Bacteria"/>
</dbReference>
<dbReference type="HOGENOM" id="CLU_098841_0_1_5"/>
<dbReference type="InParanoid" id="Q3YRM5"/>
<dbReference type="Proteomes" id="UP000000435">
    <property type="component" value="Chromosome"/>
</dbReference>
<dbReference type="GO" id="GO:0022625">
    <property type="term" value="C:cytosolic large ribosomal subunit"/>
    <property type="evidence" value="ECO:0007669"/>
    <property type="project" value="TreeGrafter"/>
</dbReference>
<dbReference type="GO" id="GO:0008097">
    <property type="term" value="F:5S rRNA binding"/>
    <property type="evidence" value="ECO:0007669"/>
    <property type="project" value="TreeGrafter"/>
</dbReference>
<dbReference type="GO" id="GO:0003735">
    <property type="term" value="F:structural constituent of ribosome"/>
    <property type="evidence" value="ECO:0007669"/>
    <property type="project" value="InterPro"/>
</dbReference>
<dbReference type="GO" id="GO:0006412">
    <property type="term" value="P:translation"/>
    <property type="evidence" value="ECO:0007669"/>
    <property type="project" value="UniProtKB-UniRule"/>
</dbReference>
<dbReference type="CDD" id="cd00432">
    <property type="entry name" value="Ribosomal_L18_L5e"/>
    <property type="match status" value="1"/>
</dbReference>
<dbReference type="Gene3D" id="3.30.420.100">
    <property type="match status" value="1"/>
</dbReference>
<dbReference type="HAMAP" id="MF_01337_B">
    <property type="entry name" value="Ribosomal_uL18_B"/>
    <property type="match status" value="1"/>
</dbReference>
<dbReference type="InterPro" id="IPR004389">
    <property type="entry name" value="Ribosomal_uL18_bac-type"/>
</dbReference>
<dbReference type="InterPro" id="IPR005484">
    <property type="entry name" value="Ribosomal_uL18_bac/euk"/>
</dbReference>
<dbReference type="NCBIfam" id="TIGR00060">
    <property type="entry name" value="L18_bact"/>
    <property type="match status" value="1"/>
</dbReference>
<dbReference type="PANTHER" id="PTHR12899">
    <property type="entry name" value="39S RIBOSOMAL PROTEIN L18, MITOCHONDRIAL"/>
    <property type="match status" value="1"/>
</dbReference>
<dbReference type="PANTHER" id="PTHR12899:SF3">
    <property type="entry name" value="LARGE RIBOSOMAL SUBUNIT PROTEIN UL18M"/>
    <property type="match status" value="1"/>
</dbReference>
<dbReference type="Pfam" id="PF00861">
    <property type="entry name" value="Ribosomal_L18p"/>
    <property type="match status" value="1"/>
</dbReference>
<dbReference type="SUPFAM" id="SSF53137">
    <property type="entry name" value="Translational machinery components"/>
    <property type="match status" value="1"/>
</dbReference>
<gene>
    <name evidence="1" type="primary">rplR</name>
    <name type="ordered locus">Ecaj_0596</name>
</gene>